<accession>Q9KMJ4</accession>
<protein>
    <recommendedName>
        <fullName>UPF0157 protein VC_A0354</fullName>
    </recommendedName>
</protein>
<reference key="1">
    <citation type="journal article" date="2000" name="Nature">
        <title>DNA sequence of both chromosomes of the cholera pathogen Vibrio cholerae.</title>
        <authorList>
            <person name="Heidelberg J.F."/>
            <person name="Eisen J.A."/>
            <person name="Nelson W.C."/>
            <person name="Clayton R.A."/>
            <person name="Gwinn M.L."/>
            <person name="Dodson R.J."/>
            <person name="Haft D.H."/>
            <person name="Hickey E.K."/>
            <person name="Peterson J.D."/>
            <person name="Umayam L.A."/>
            <person name="Gill S.R."/>
            <person name="Nelson K.E."/>
            <person name="Read T.D."/>
            <person name="Tettelin H."/>
            <person name="Richardson D.L."/>
            <person name="Ermolaeva M.D."/>
            <person name="Vamathevan J.J."/>
            <person name="Bass S."/>
            <person name="Qin H."/>
            <person name="Dragoi I."/>
            <person name="Sellers P."/>
            <person name="McDonald L.A."/>
            <person name="Utterback T.R."/>
            <person name="Fleischmann R.D."/>
            <person name="Nierman W.C."/>
            <person name="White O."/>
            <person name="Salzberg S.L."/>
            <person name="Smith H.O."/>
            <person name="Colwell R.R."/>
            <person name="Mekalanos J.J."/>
            <person name="Venter J.C."/>
            <person name="Fraser C.M."/>
        </authorList>
    </citation>
    <scope>NUCLEOTIDE SEQUENCE [LARGE SCALE GENOMIC DNA]</scope>
    <source>
        <strain>ATCC 39315 / El Tor Inaba N16961</strain>
    </source>
</reference>
<sequence length="188" mass="21038">MSRGGFGGLCLGLVVMRCQPLRRALCLLGDNMQFYKADEYQASCENLYRKYELEIAALLPDASIEHIGTSSIPNAVSKGDLDILVGVNGKELENAVKLLSTLGFNEKSDTLRTPELCMLENSSGEDVAFQVVANGSEFEFFVGFRDKLRKNPELVQRYNELKISCTGWSHEEYRRKKSAFIERVLGQA</sequence>
<keyword id="KW-1185">Reference proteome</keyword>
<proteinExistence type="inferred from homology"/>
<organism>
    <name type="scientific">Vibrio cholerae serotype O1 (strain ATCC 39315 / El Tor Inaba N16961)</name>
    <dbReference type="NCBI Taxonomy" id="243277"/>
    <lineage>
        <taxon>Bacteria</taxon>
        <taxon>Pseudomonadati</taxon>
        <taxon>Pseudomonadota</taxon>
        <taxon>Gammaproteobacteria</taxon>
        <taxon>Vibrionales</taxon>
        <taxon>Vibrionaceae</taxon>
        <taxon>Vibrio</taxon>
    </lineage>
</organism>
<gene>
    <name type="ordered locus">VC_A0354</name>
</gene>
<dbReference type="EMBL" id="AE003853">
    <property type="protein sequence ID" value="AAF96262.1"/>
    <property type="molecule type" value="Genomic_DNA"/>
</dbReference>
<dbReference type="PIR" id="B82471">
    <property type="entry name" value="B82471"/>
</dbReference>
<dbReference type="SMR" id="Q9KMJ4"/>
<dbReference type="STRING" id="243277.VC_A0354"/>
<dbReference type="DNASU" id="2611831"/>
<dbReference type="EnsemblBacteria" id="AAF96262">
    <property type="protein sequence ID" value="AAF96262"/>
    <property type="gene ID" value="VC_A0354"/>
</dbReference>
<dbReference type="KEGG" id="vch:VC_A0354"/>
<dbReference type="eggNOG" id="COG2320">
    <property type="taxonomic scope" value="Bacteria"/>
</dbReference>
<dbReference type="HOGENOM" id="CLU_136761_0_0_6"/>
<dbReference type="Proteomes" id="UP000000584">
    <property type="component" value="Chromosome 2"/>
</dbReference>
<dbReference type="AntiFam" id="ANF00278">
    <property type="entry name" value="Spurious ORF motif from attC repeats"/>
</dbReference>
<dbReference type="Gene3D" id="3.30.460.10">
    <property type="entry name" value="Beta Polymerase, domain 2"/>
    <property type="match status" value="1"/>
</dbReference>
<dbReference type="InterPro" id="IPR007344">
    <property type="entry name" value="GrpB/CoaE"/>
</dbReference>
<dbReference type="InterPro" id="IPR043519">
    <property type="entry name" value="NT_sf"/>
</dbReference>
<dbReference type="NCBIfam" id="NF041952">
    <property type="entry name" value="super_attC_Vc_1"/>
    <property type="match status" value="1"/>
</dbReference>
<dbReference type="PANTHER" id="PTHR34822">
    <property type="entry name" value="GRPB DOMAIN PROTEIN (AFU_ORTHOLOGUE AFUA_1G01530)"/>
    <property type="match status" value="1"/>
</dbReference>
<dbReference type="PANTHER" id="PTHR34822:SF1">
    <property type="entry name" value="GRPB FAMILY PROTEIN"/>
    <property type="match status" value="1"/>
</dbReference>
<dbReference type="Pfam" id="PF04229">
    <property type="entry name" value="GrpB"/>
    <property type="match status" value="1"/>
</dbReference>
<dbReference type="SUPFAM" id="SSF81301">
    <property type="entry name" value="Nucleotidyltransferase"/>
    <property type="match status" value="1"/>
</dbReference>
<feature type="chain" id="PRO_0000216131" description="UPF0157 protein VC_A0354">
    <location>
        <begin position="1"/>
        <end position="188"/>
    </location>
</feature>
<comment type="similarity">
    <text evidence="1">Belongs to the UPF0157 (GrpB) family.</text>
</comment>
<name>Y3154_VIBCH</name>
<evidence type="ECO:0000305" key="1"/>